<organism>
    <name type="scientific">Ambrosia trifida</name>
    <name type="common">Giant ragweed</name>
    <dbReference type="NCBI Taxonomy" id="4214"/>
    <lineage>
        <taxon>Eukaryota</taxon>
        <taxon>Viridiplantae</taxon>
        <taxon>Streptophyta</taxon>
        <taxon>Embryophyta</taxon>
        <taxon>Tracheophyta</taxon>
        <taxon>Spermatophyta</taxon>
        <taxon>Magnoliopsida</taxon>
        <taxon>eudicotyledons</taxon>
        <taxon>Gunneridae</taxon>
        <taxon>Pentapetalae</taxon>
        <taxon>asterids</taxon>
        <taxon>campanulids</taxon>
        <taxon>Asterales</taxon>
        <taxon>Asteraceae</taxon>
        <taxon>Asteroideae</taxon>
        <taxon>Heliantheae alliance</taxon>
        <taxon>Heliantheae</taxon>
        <taxon>Ambrosia</taxon>
    </lineage>
</organism>
<sequence length="73" mass="8058">MKNIFMLTLFILIITSTIKAIGSTNEVDEIKQEDDGLCYEGTNCGKVGKYCCSPIGKYCVCYDSKAICNKNCT</sequence>
<evidence type="ECO:0000255" key="1"/>
<evidence type="ECO:0000269" key="2">
    <source>
    </source>
</evidence>
<evidence type="ECO:0007829" key="3">
    <source>
        <dbReference type="PDB" id="1BBG"/>
    </source>
</evidence>
<protein>
    <recommendedName>
        <fullName>Pollen allergen Amb t 5</fullName>
    </recommendedName>
    <alternativeName>
        <fullName>Allergen Amb t V</fullName>
    </alternativeName>
    <alternativeName>
        <fullName>Allergen Ra5G</fullName>
    </alternativeName>
    <allergenName>Amb t 5</allergenName>
</protein>
<feature type="signal peptide" evidence="1">
    <location>
        <begin position="1"/>
        <end position="20"/>
    </location>
</feature>
<feature type="propeptide" id="PRO_0000021751" evidence="1">
    <location>
        <begin position="21"/>
        <end position="33"/>
    </location>
</feature>
<feature type="chain" id="PRO_0000021752" description="Pollen allergen Amb t 5">
    <location>
        <begin position="34"/>
        <end position="73"/>
    </location>
</feature>
<feature type="disulfide bond" evidence="2">
    <location>
        <begin position="38"/>
        <end position="68"/>
    </location>
</feature>
<feature type="disulfide bond" evidence="2">
    <location>
        <begin position="44"/>
        <end position="59"/>
    </location>
</feature>
<feature type="disulfide bond" evidence="2">
    <location>
        <begin position="51"/>
        <end position="61"/>
    </location>
</feature>
<feature type="disulfide bond" evidence="2">
    <location>
        <begin position="52"/>
        <end position="72"/>
    </location>
</feature>
<feature type="strand" evidence="3">
    <location>
        <begin position="39"/>
        <end position="42"/>
    </location>
</feature>
<feature type="strand" evidence="3">
    <location>
        <begin position="49"/>
        <end position="52"/>
    </location>
</feature>
<feature type="strand" evidence="3">
    <location>
        <begin position="54"/>
        <end position="58"/>
    </location>
</feature>
<feature type="strand" evidence="3">
    <location>
        <begin position="60"/>
        <end position="64"/>
    </location>
</feature>
<feature type="helix" evidence="3">
    <location>
        <begin position="65"/>
        <end position="72"/>
    </location>
</feature>
<accession>P10414</accession>
<keyword id="KW-0002">3D-structure</keyword>
<keyword id="KW-0020">Allergen</keyword>
<keyword id="KW-0903">Direct protein sequencing</keyword>
<keyword id="KW-1015">Disulfide bond</keyword>
<keyword id="KW-0732">Signal</keyword>
<proteinExistence type="evidence at protein level"/>
<reference key="1">
    <citation type="journal article" date="1991" name="Gene">
        <title>Cloning the cDNA encoding the AmbtV allergen from giant ragweed (Ambrosia trifida) pollen.</title>
        <authorList>
            <person name="Ghosh B."/>
            <person name="Perry M.P."/>
            <person name="Marsh D.G."/>
        </authorList>
    </citation>
    <scope>NUCLEOTIDE SEQUENCE [MRNA]</scope>
    <source>
        <tissue>Pollen</tissue>
    </source>
</reference>
<reference key="2">
    <citation type="journal article" date="1985" name="Mol. Immunol.">
        <title>Ra5G, a homologue of Ra5 in giant ragweed pollen: isolation, HLA-DR-associated activity and amino acid sequence.</title>
        <authorList>
            <person name="Goodfriend L."/>
            <person name="Choudhury A.M."/>
            <person name="Klapper D.G."/>
            <person name="Coulter K.M."/>
            <person name="Dorval G."/>
            <person name="del Carpio J."/>
            <person name="Osterland C.K."/>
        </authorList>
    </citation>
    <scope>PROTEIN SEQUENCE OF 34-73</scope>
    <source>
        <tissue>Pollen</tissue>
    </source>
</reference>
<reference key="3">
    <citation type="journal article" date="1992" name="Biochemistry">
        <title>Determination of the three-dimensional solution structure of ragweed allergen Amb t V by nuclear magnetic resonance spectroscopy.</title>
        <authorList>
            <person name="Metzler W.J."/>
            <person name="Valentine K."/>
            <person name="Roebber M."/>
            <person name="Friedrichs M.S."/>
            <person name="Marsh D.G."/>
            <person name="Mueller L."/>
        </authorList>
    </citation>
    <scope>STRUCTURE BY NMR OF 34-73</scope>
    <source>
        <tissue>Pollen</tissue>
    </source>
</reference>
<reference key="4">
    <citation type="submission" date="1998-04" db="PDB data bank">
        <authorList>
            <person name="Warren G.L."/>
            <person name="Turner C.J."/>
            <person name="Petsko G.A."/>
            <person name="Brunger A.T."/>
        </authorList>
    </citation>
    <scope>STRUCTURE BY NMR OF 34-73</scope>
    <source>
        <tissue>Pollen</tissue>
    </source>
</reference>
<comment type="subunit">
    <text>Monomer.</text>
</comment>
<comment type="allergen">
    <text>Causes an allergic reaction in human.</text>
</comment>
<dbReference type="EMBL" id="X56279">
    <property type="protein sequence ID" value="CAA39726.1"/>
    <property type="molecule type" value="mRNA"/>
</dbReference>
<dbReference type="EMBL" id="M38782">
    <property type="protein sequence ID" value="AAB02877.1"/>
    <property type="molecule type" value="mRNA"/>
</dbReference>
<dbReference type="PIR" id="JQ1001">
    <property type="entry name" value="ARRA5G"/>
</dbReference>
<dbReference type="PDB" id="1BBG">
    <property type="method" value="NMR"/>
    <property type="chains" value="A=34-73"/>
</dbReference>
<dbReference type="PDB" id="2BBG">
    <property type="method" value="NMR"/>
    <property type="chains" value="A=34-73"/>
</dbReference>
<dbReference type="PDB" id="3BBG">
    <property type="method" value="NMR"/>
    <property type="chains" value="A=34-73"/>
</dbReference>
<dbReference type="PDBsum" id="1BBG"/>
<dbReference type="PDBsum" id="2BBG"/>
<dbReference type="PDBsum" id="3BBG"/>
<dbReference type="BMRB" id="P10414"/>
<dbReference type="SMR" id="P10414"/>
<dbReference type="Allergome" id="3074">
    <property type="allergen name" value="Amb t 5.0101"/>
</dbReference>
<dbReference type="Allergome" id="32">
    <property type="allergen name" value="Amb t 5"/>
</dbReference>
<dbReference type="EvolutionaryTrace" id="P10414"/>
<dbReference type="Gene3D" id="3.30.160.80">
    <property type="entry name" value="Amb V Allergen"/>
    <property type="match status" value="1"/>
</dbReference>
<dbReference type="InterPro" id="IPR005611">
    <property type="entry name" value="Amb_V_allergen"/>
</dbReference>
<dbReference type="InterPro" id="IPR036712">
    <property type="entry name" value="Amb_V_allergen_sf"/>
</dbReference>
<dbReference type="Pfam" id="PF03913">
    <property type="entry name" value="Ragweed_pollen"/>
    <property type="match status" value="1"/>
</dbReference>
<dbReference type="PIRSF" id="PIRSF002697">
    <property type="entry name" value="Amb_V_allergen"/>
    <property type="match status" value="1"/>
</dbReference>
<dbReference type="SMART" id="SM00816">
    <property type="entry name" value="Amb_V_allergen"/>
    <property type="match status" value="1"/>
</dbReference>
<dbReference type="SUPFAM" id="SSF57296">
    <property type="entry name" value="Amb V allergen"/>
    <property type="match status" value="1"/>
</dbReference>
<name>MPAT5_AMBTR</name>